<feature type="chain" id="PRO_1000071305" description="4-hydroxy-tetrahydrodipicolinate reductase">
    <location>
        <begin position="1"/>
        <end position="269"/>
    </location>
</feature>
<feature type="active site" description="Proton donor/acceptor" evidence="1">
    <location>
        <position position="155"/>
    </location>
</feature>
<feature type="active site" description="Proton donor" evidence="1">
    <location>
        <position position="159"/>
    </location>
</feature>
<feature type="binding site" evidence="1">
    <location>
        <begin position="8"/>
        <end position="13"/>
    </location>
    <ligand>
        <name>NAD(+)</name>
        <dbReference type="ChEBI" id="CHEBI:57540"/>
    </ligand>
</feature>
<feature type="binding site" evidence="1">
    <location>
        <position position="34"/>
    </location>
    <ligand>
        <name>NAD(+)</name>
        <dbReference type="ChEBI" id="CHEBI:57540"/>
    </ligand>
</feature>
<feature type="binding site" evidence="1">
    <location>
        <position position="35"/>
    </location>
    <ligand>
        <name>NADP(+)</name>
        <dbReference type="ChEBI" id="CHEBI:58349"/>
    </ligand>
</feature>
<feature type="binding site" evidence="1">
    <location>
        <begin position="98"/>
        <end position="100"/>
    </location>
    <ligand>
        <name>NAD(+)</name>
        <dbReference type="ChEBI" id="CHEBI:57540"/>
    </ligand>
</feature>
<feature type="binding site" evidence="1">
    <location>
        <begin position="122"/>
        <end position="125"/>
    </location>
    <ligand>
        <name>NAD(+)</name>
        <dbReference type="ChEBI" id="CHEBI:57540"/>
    </ligand>
</feature>
<feature type="binding site" evidence="1">
    <location>
        <position position="156"/>
    </location>
    <ligand>
        <name>(S)-2,3,4,5-tetrahydrodipicolinate</name>
        <dbReference type="ChEBI" id="CHEBI:16845"/>
    </ligand>
</feature>
<feature type="binding site" evidence="1">
    <location>
        <begin position="165"/>
        <end position="166"/>
    </location>
    <ligand>
        <name>(S)-2,3,4,5-tetrahydrodipicolinate</name>
        <dbReference type="ChEBI" id="CHEBI:16845"/>
    </ligand>
</feature>
<dbReference type="EC" id="1.17.1.8" evidence="1"/>
<dbReference type="EMBL" id="CP000627">
    <property type="protein sequence ID" value="ABQ20857.1"/>
    <property type="molecule type" value="Genomic_DNA"/>
</dbReference>
<dbReference type="EMBL" id="CP001235">
    <property type="protein sequence ID" value="ACP10495.1"/>
    <property type="molecule type" value="Genomic_DNA"/>
</dbReference>
<dbReference type="RefSeq" id="WP_000251590.1">
    <property type="nucleotide sequence ID" value="NZ_JAACZH010000010.1"/>
</dbReference>
<dbReference type="SMR" id="A5F5N9"/>
<dbReference type="GeneID" id="88783203"/>
<dbReference type="KEGG" id="vco:VC0395_A1970"/>
<dbReference type="KEGG" id="vcr:VC395_2506"/>
<dbReference type="PATRIC" id="fig|345073.21.peg.2411"/>
<dbReference type="eggNOG" id="COG0289">
    <property type="taxonomic scope" value="Bacteria"/>
</dbReference>
<dbReference type="HOGENOM" id="CLU_047479_2_1_6"/>
<dbReference type="OrthoDB" id="9790352at2"/>
<dbReference type="UniPathway" id="UPA00034">
    <property type="reaction ID" value="UER00018"/>
</dbReference>
<dbReference type="Proteomes" id="UP000000249">
    <property type="component" value="Chromosome 2"/>
</dbReference>
<dbReference type="GO" id="GO:0005829">
    <property type="term" value="C:cytosol"/>
    <property type="evidence" value="ECO:0007669"/>
    <property type="project" value="TreeGrafter"/>
</dbReference>
<dbReference type="GO" id="GO:0008839">
    <property type="term" value="F:4-hydroxy-tetrahydrodipicolinate reductase"/>
    <property type="evidence" value="ECO:0007669"/>
    <property type="project" value="UniProtKB-EC"/>
</dbReference>
<dbReference type="GO" id="GO:0051287">
    <property type="term" value="F:NAD binding"/>
    <property type="evidence" value="ECO:0007669"/>
    <property type="project" value="UniProtKB-UniRule"/>
</dbReference>
<dbReference type="GO" id="GO:0050661">
    <property type="term" value="F:NADP binding"/>
    <property type="evidence" value="ECO:0007669"/>
    <property type="project" value="UniProtKB-UniRule"/>
</dbReference>
<dbReference type="GO" id="GO:0016726">
    <property type="term" value="F:oxidoreductase activity, acting on CH or CH2 groups, NAD or NADP as acceptor"/>
    <property type="evidence" value="ECO:0007669"/>
    <property type="project" value="UniProtKB-UniRule"/>
</dbReference>
<dbReference type="GO" id="GO:0019877">
    <property type="term" value="P:diaminopimelate biosynthetic process"/>
    <property type="evidence" value="ECO:0007669"/>
    <property type="project" value="UniProtKB-UniRule"/>
</dbReference>
<dbReference type="GO" id="GO:0009089">
    <property type="term" value="P:lysine biosynthetic process via diaminopimelate"/>
    <property type="evidence" value="ECO:0007669"/>
    <property type="project" value="UniProtKB-UniRule"/>
</dbReference>
<dbReference type="CDD" id="cd02274">
    <property type="entry name" value="DHDPR_N"/>
    <property type="match status" value="1"/>
</dbReference>
<dbReference type="FunFam" id="3.30.360.10:FF:000004">
    <property type="entry name" value="4-hydroxy-tetrahydrodipicolinate reductase"/>
    <property type="match status" value="1"/>
</dbReference>
<dbReference type="FunFam" id="3.40.50.720:FF:000048">
    <property type="entry name" value="4-hydroxy-tetrahydrodipicolinate reductase"/>
    <property type="match status" value="1"/>
</dbReference>
<dbReference type="Gene3D" id="3.30.360.10">
    <property type="entry name" value="Dihydrodipicolinate Reductase, domain 2"/>
    <property type="match status" value="1"/>
</dbReference>
<dbReference type="Gene3D" id="3.40.50.720">
    <property type="entry name" value="NAD(P)-binding Rossmann-like Domain"/>
    <property type="match status" value="1"/>
</dbReference>
<dbReference type="HAMAP" id="MF_00102">
    <property type="entry name" value="DapB"/>
    <property type="match status" value="1"/>
</dbReference>
<dbReference type="InterPro" id="IPR022663">
    <property type="entry name" value="DapB_C"/>
</dbReference>
<dbReference type="InterPro" id="IPR000846">
    <property type="entry name" value="DapB_N"/>
</dbReference>
<dbReference type="InterPro" id="IPR022664">
    <property type="entry name" value="DapB_N_CS"/>
</dbReference>
<dbReference type="InterPro" id="IPR023940">
    <property type="entry name" value="DHDPR_bac"/>
</dbReference>
<dbReference type="InterPro" id="IPR036291">
    <property type="entry name" value="NAD(P)-bd_dom_sf"/>
</dbReference>
<dbReference type="NCBIfam" id="TIGR00036">
    <property type="entry name" value="dapB"/>
    <property type="match status" value="1"/>
</dbReference>
<dbReference type="PANTHER" id="PTHR20836:SF0">
    <property type="entry name" value="4-HYDROXY-TETRAHYDRODIPICOLINATE REDUCTASE 1, CHLOROPLASTIC-RELATED"/>
    <property type="match status" value="1"/>
</dbReference>
<dbReference type="PANTHER" id="PTHR20836">
    <property type="entry name" value="DIHYDRODIPICOLINATE REDUCTASE"/>
    <property type="match status" value="1"/>
</dbReference>
<dbReference type="Pfam" id="PF05173">
    <property type="entry name" value="DapB_C"/>
    <property type="match status" value="1"/>
</dbReference>
<dbReference type="Pfam" id="PF01113">
    <property type="entry name" value="DapB_N"/>
    <property type="match status" value="1"/>
</dbReference>
<dbReference type="PIRSF" id="PIRSF000161">
    <property type="entry name" value="DHPR"/>
    <property type="match status" value="1"/>
</dbReference>
<dbReference type="SUPFAM" id="SSF55347">
    <property type="entry name" value="Glyceraldehyde-3-phosphate dehydrogenase-like, C-terminal domain"/>
    <property type="match status" value="1"/>
</dbReference>
<dbReference type="SUPFAM" id="SSF51735">
    <property type="entry name" value="NAD(P)-binding Rossmann-fold domains"/>
    <property type="match status" value="1"/>
</dbReference>
<dbReference type="PROSITE" id="PS01298">
    <property type="entry name" value="DAPB"/>
    <property type="match status" value="1"/>
</dbReference>
<evidence type="ECO:0000255" key="1">
    <source>
        <dbReference type="HAMAP-Rule" id="MF_00102"/>
    </source>
</evidence>
<evidence type="ECO:0000305" key="2"/>
<protein>
    <recommendedName>
        <fullName evidence="1">4-hydroxy-tetrahydrodipicolinate reductase</fullName>
        <shortName evidence="1">HTPA reductase</shortName>
        <ecNumber evidence="1">1.17.1.8</ecNumber>
    </recommendedName>
</protein>
<accession>A5F5N9</accession>
<accession>C3M4B3</accession>
<gene>
    <name evidence="1" type="primary">dapB</name>
    <name type="ordered locus">VC0395_A1970</name>
    <name type="ordered locus">VC395_2506</name>
</gene>
<name>DAPB_VIBC3</name>
<sequence>MVRIAIAGAAGRMGRNLVKATHQNPLSELGAGSERPESSLVGVDIGELCGIGKQGIVLVDNLEQAVEQFDVIIDFTAPASTLANLALCEQHGKKLVIGTTGFTDAQRQTIEQAAKKIPIVMAPNYSVGVNLVFKLLEKAAKVMGDYCDIEIIEAHHRHKVDAPSGTAIGMGEAIAHAMGNQLSDVAVYAREGITGERSRNEIGFATIRAGDIIGEHTAMFADIGERVEITHKATDRMTFANGAVKAAIWLAEQPAGFYTMTDVLGLNDL</sequence>
<reference key="1">
    <citation type="submission" date="2007-03" db="EMBL/GenBank/DDBJ databases">
        <authorList>
            <person name="Heidelberg J."/>
        </authorList>
    </citation>
    <scope>NUCLEOTIDE SEQUENCE [LARGE SCALE GENOMIC DNA]</scope>
    <source>
        <strain>ATCC 39541 / Classical Ogawa 395 / O395</strain>
    </source>
</reference>
<reference key="2">
    <citation type="journal article" date="2008" name="PLoS ONE">
        <title>A recalibrated molecular clock and independent origins for the cholera pandemic clones.</title>
        <authorList>
            <person name="Feng L."/>
            <person name="Reeves P.R."/>
            <person name="Lan R."/>
            <person name="Ren Y."/>
            <person name="Gao C."/>
            <person name="Zhou Z."/>
            <person name="Ren Y."/>
            <person name="Cheng J."/>
            <person name="Wang W."/>
            <person name="Wang J."/>
            <person name="Qian W."/>
            <person name="Li D."/>
            <person name="Wang L."/>
        </authorList>
    </citation>
    <scope>NUCLEOTIDE SEQUENCE [LARGE SCALE GENOMIC DNA]</scope>
    <source>
        <strain>ATCC 39541 / Classical Ogawa 395 / O395</strain>
    </source>
</reference>
<keyword id="KW-0028">Amino-acid biosynthesis</keyword>
<keyword id="KW-0963">Cytoplasm</keyword>
<keyword id="KW-0220">Diaminopimelate biosynthesis</keyword>
<keyword id="KW-0457">Lysine biosynthesis</keyword>
<keyword id="KW-0520">NAD</keyword>
<keyword id="KW-0521">NADP</keyword>
<keyword id="KW-0560">Oxidoreductase</keyword>
<proteinExistence type="inferred from homology"/>
<organism>
    <name type="scientific">Vibrio cholerae serotype O1 (strain ATCC 39541 / Classical Ogawa 395 / O395)</name>
    <dbReference type="NCBI Taxonomy" id="345073"/>
    <lineage>
        <taxon>Bacteria</taxon>
        <taxon>Pseudomonadati</taxon>
        <taxon>Pseudomonadota</taxon>
        <taxon>Gammaproteobacteria</taxon>
        <taxon>Vibrionales</taxon>
        <taxon>Vibrionaceae</taxon>
        <taxon>Vibrio</taxon>
    </lineage>
</organism>
<comment type="function">
    <text evidence="1">Catalyzes the conversion of 4-hydroxy-tetrahydrodipicolinate (HTPA) to tetrahydrodipicolinate.</text>
</comment>
<comment type="catalytic activity">
    <reaction evidence="1">
        <text>(S)-2,3,4,5-tetrahydrodipicolinate + NAD(+) + H2O = (2S,4S)-4-hydroxy-2,3,4,5-tetrahydrodipicolinate + NADH + H(+)</text>
        <dbReference type="Rhea" id="RHEA:35323"/>
        <dbReference type="ChEBI" id="CHEBI:15377"/>
        <dbReference type="ChEBI" id="CHEBI:15378"/>
        <dbReference type="ChEBI" id="CHEBI:16845"/>
        <dbReference type="ChEBI" id="CHEBI:57540"/>
        <dbReference type="ChEBI" id="CHEBI:57945"/>
        <dbReference type="ChEBI" id="CHEBI:67139"/>
        <dbReference type="EC" id="1.17.1.8"/>
    </reaction>
</comment>
<comment type="catalytic activity">
    <reaction evidence="1">
        <text>(S)-2,3,4,5-tetrahydrodipicolinate + NADP(+) + H2O = (2S,4S)-4-hydroxy-2,3,4,5-tetrahydrodipicolinate + NADPH + H(+)</text>
        <dbReference type="Rhea" id="RHEA:35331"/>
        <dbReference type="ChEBI" id="CHEBI:15377"/>
        <dbReference type="ChEBI" id="CHEBI:15378"/>
        <dbReference type="ChEBI" id="CHEBI:16845"/>
        <dbReference type="ChEBI" id="CHEBI:57783"/>
        <dbReference type="ChEBI" id="CHEBI:58349"/>
        <dbReference type="ChEBI" id="CHEBI:67139"/>
        <dbReference type="EC" id="1.17.1.8"/>
    </reaction>
</comment>
<comment type="pathway">
    <text evidence="1">Amino-acid biosynthesis; L-lysine biosynthesis via DAP pathway; (S)-tetrahydrodipicolinate from L-aspartate: step 4/4.</text>
</comment>
<comment type="subcellular location">
    <subcellularLocation>
        <location evidence="1">Cytoplasm</location>
    </subcellularLocation>
</comment>
<comment type="similarity">
    <text evidence="1">Belongs to the DapB family.</text>
</comment>
<comment type="caution">
    <text evidence="2">Was originally thought to be a dihydrodipicolinate reductase (DHDPR), catalyzing the conversion of dihydrodipicolinate to tetrahydrodipicolinate. However, it was shown in E.coli that the substrate of the enzymatic reaction is not dihydrodipicolinate (DHDP) but in fact (2S,4S)-4-hydroxy-2,3,4,5-tetrahydrodipicolinic acid (HTPA), the product released by the DapA-catalyzed reaction.</text>
</comment>